<accession>Q4IAS1</accession>
<accession>A0A0E0SKL6</accession>
<accession>V6RBS6</accession>
<organism>
    <name type="scientific">Gibberella zeae (strain ATCC MYA-4620 / CBS 123657 / FGSC 9075 / NRRL 31084 / PH-1)</name>
    <name type="common">Wheat head blight fungus</name>
    <name type="synonym">Fusarium graminearum</name>
    <dbReference type="NCBI Taxonomy" id="229533"/>
    <lineage>
        <taxon>Eukaryota</taxon>
        <taxon>Fungi</taxon>
        <taxon>Dikarya</taxon>
        <taxon>Ascomycota</taxon>
        <taxon>Pezizomycotina</taxon>
        <taxon>Sordariomycetes</taxon>
        <taxon>Hypocreomycetidae</taxon>
        <taxon>Hypocreales</taxon>
        <taxon>Nectriaceae</taxon>
        <taxon>Fusarium</taxon>
    </lineage>
</organism>
<proteinExistence type="inferred from homology"/>
<feature type="chain" id="PRO_0000232200" description="ATP-dependent RNA helicase DBP4">
    <location>
        <begin position="1"/>
        <end position="793"/>
    </location>
</feature>
<feature type="domain" description="Helicase ATP-binding" evidence="2">
    <location>
        <begin position="82"/>
        <end position="256"/>
    </location>
</feature>
<feature type="domain" description="Helicase C-terminal" evidence="3">
    <location>
        <begin position="282"/>
        <end position="431"/>
    </location>
</feature>
<feature type="region of interest" description="Disordered" evidence="4">
    <location>
        <begin position="1"/>
        <end position="33"/>
    </location>
</feature>
<feature type="region of interest" description="Disordered" evidence="4">
    <location>
        <begin position="497"/>
        <end position="535"/>
    </location>
</feature>
<feature type="region of interest" description="Disordered" evidence="4">
    <location>
        <begin position="648"/>
        <end position="793"/>
    </location>
</feature>
<feature type="short sequence motif" description="Q motif">
    <location>
        <begin position="51"/>
        <end position="79"/>
    </location>
</feature>
<feature type="short sequence motif" description="DEAD box">
    <location>
        <begin position="204"/>
        <end position="207"/>
    </location>
</feature>
<feature type="compositionally biased region" description="Basic and acidic residues" evidence="4">
    <location>
        <begin position="17"/>
        <end position="31"/>
    </location>
</feature>
<feature type="compositionally biased region" description="Basic and acidic residues" evidence="4">
    <location>
        <begin position="657"/>
        <end position="681"/>
    </location>
</feature>
<feature type="compositionally biased region" description="Basic residues" evidence="4">
    <location>
        <begin position="682"/>
        <end position="693"/>
    </location>
</feature>
<feature type="compositionally biased region" description="Basic and acidic residues" evidence="4">
    <location>
        <begin position="739"/>
        <end position="754"/>
    </location>
</feature>
<feature type="binding site" evidence="2">
    <location>
        <begin position="95"/>
        <end position="102"/>
    </location>
    <ligand>
        <name>ATP</name>
        <dbReference type="ChEBI" id="CHEBI:30616"/>
    </ligand>
</feature>
<protein>
    <recommendedName>
        <fullName>ATP-dependent RNA helicase DBP4</fullName>
        <ecNumber>3.6.4.13</ecNumber>
    </recommendedName>
</protein>
<comment type="function">
    <text evidence="1">ATP-dependent RNA helicase required for ribosome biogenesis. Involved in the release of U14 snoRNA in pre-ribosomal complexes. Required for pre-rRNA cleavage at site A2 (By similarity).</text>
</comment>
<comment type="catalytic activity">
    <reaction>
        <text>ATP + H2O = ADP + phosphate + H(+)</text>
        <dbReference type="Rhea" id="RHEA:13065"/>
        <dbReference type="ChEBI" id="CHEBI:15377"/>
        <dbReference type="ChEBI" id="CHEBI:15378"/>
        <dbReference type="ChEBI" id="CHEBI:30616"/>
        <dbReference type="ChEBI" id="CHEBI:43474"/>
        <dbReference type="ChEBI" id="CHEBI:456216"/>
        <dbReference type="EC" id="3.6.4.13"/>
    </reaction>
</comment>
<comment type="subunit">
    <text evidence="1">Interacts with the U3 and U14 snoRNAs. Associates with pre-ribosomal complexes (By similarity).</text>
</comment>
<comment type="subcellular location">
    <subcellularLocation>
        <location evidence="1">Nucleus</location>
        <location evidence="1">Nucleolus</location>
    </subcellularLocation>
</comment>
<comment type="domain">
    <text>The Q motif is unique to and characteristic of the DEAD box family of RNA helicases and controls ATP binding and hydrolysis.</text>
</comment>
<comment type="similarity">
    <text evidence="5">Belongs to the DEAD box helicase family. DDX10/DBP4 subfamily.</text>
</comment>
<gene>
    <name type="primary">DBP4</name>
    <name type="ORF">FGRRES_05687</name>
    <name type="ORF">FGSG_05687</name>
</gene>
<reference key="1">
    <citation type="journal article" date="2007" name="Science">
        <title>The Fusarium graminearum genome reveals a link between localized polymorphism and pathogen specialization.</title>
        <authorList>
            <person name="Cuomo C.A."/>
            <person name="Gueldener U."/>
            <person name="Xu J.-R."/>
            <person name="Trail F."/>
            <person name="Turgeon B.G."/>
            <person name="Di Pietro A."/>
            <person name="Walton J.D."/>
            <person name="Ma L.-J."/>
            <person name="Baker S.E."/>
            <person name="Rep M."/>
            <person name="Adam G."/>
            <person name="Antoniw J."/>
            <person name="Baldwin T."/>
            <person name="Calvo S.E."/>
            <person name="Chang Y.-L."/>
            <person name="DeCaprio D."/>
            <person name="Gale L.R."/>
            <person name="Gnerre S."/>
            <person name="Goswami R.S."/>
            <person name="Hammond-Kosack K."/>
            <person name="Harris L.J."/>
            <person name="Hilburn K."/>
            <person name="Kennell J.C."/>
            <person name="Kroken S."/>
            <person name="Magnuson J.K."/>
            <person name="Mannhaupt G."/>
            <person name="Mauceli E.W."/>
            <person name="Mewes H.-W."/>
            <person name="Mitterbauer R."/>
            <person name="Muehlbauer G."/>
            <person name="Muensterkoetter M."/>
            <person name="Nelson D."/>
            <person name="O'Donnell K."/>
            <person name="Ouellet T."/>
            <person name="Qi W."/>
            <person name="Quesneville H."/>
            <person name="Roncero M.I.G."/>
            <person name="Seong K.-Y."/>
            <person name="Tetko I.V."/>
            <person name="Urban M."/>
            <person name="Waalwijk C."/>
            <person name="Ward T.J."/>
            <person name="Yao J."/>
            <person name="Birren B.W."/>
            <person name="Kistler H.C."/>
        </authorList>
    </citation>
    <scope>NUCLEOTIDE SEQUENCE [LARGE SCALE GENOMIC DNA]</scope>
    <source>
        <strain>ATCC MYA-4620 / CBS 123657 / FGSC 9075 / NRRL 31084 / PH-1</strain>
    </source>
</reference>
<reference key="2">
    <citation type="journal article" date="2010" name="Nature">
        <title>Comparative genomics reveals mobile pathogenicity chromosomes in Fusarium.</title>
        <authorList>
            <person name="Ma L.-J."/>
            <person name="van der Does H.C."/>
            <person name="Borkovich K.A."/>
            <person name="Coleman J.J."/>
            <person name="Daboussi M.-J."/>
            <person name="Di Pietro A."/>
            <person name="Dufresne M."/>
            <person name="Freitag M."/>
            <person name="Grabherr M."/>
            <person name="Henrissat B."/>
            <person name="Houterman P.M."/>
            <person name="Kang S."/>
            <person name="Shim W.-B."/>
            <person name="Woloshuk C."/>
            <person name="Xie X."/>
            <person name="Xu J.-R."/>
            <person name="Antoniw J."/>
            <person name="Baker S.E."/>
            <person name="Bluhm B.H."/>
            <person name="Breakspear A."/>
            <person name="Brown D.W."/>
            <person name="Butchko R.A.E."/>
            <person name="Chapman S."/>
            <person name="Coulson R."/>
            <person name="Coutinho P.M."/>
            <person name="Danchin E.G.J."/>
            <person name="Diener A."/>
            <person name="Gale L.R."/>
            <person name="Gardiner D.M."/>
            <person name="Goff S."/>
            <person name="Hammond-Kosack K.E."/>
            <person name="Hilburn K."/>
            <person name="Hua-Van A."/>
            <person name="Jonkers W."/>
            <person name="Kazan K."/>
            <person name="Kodira C.D."/>
            <person name="Koehrsen M."/>
            <person name="Kumar L."/>
            <person name="Lee Y.-H."/>
            <person name="Li L."/>
            <person name="Manners J.M."/>
            <person name="Miranda-Saavedra D."/>
            <person name="Mukherjee M."/>
            <person name="Park G."/>
            <person name="Park J."/>
            <person name="Park S.-Y."/>
            <person name="Proctor R.H."/>
            <person name="Regev A."/>
            <person name="Ruiz-Roldan M.C."/>
            <person name="Sain D."/>
            <person name="Sakthikumar S."/>
            <person name="Sykes S."/>
            <person name="Schwartz D.C."/>
            <person name="Turgeon B.G."/>
            <person name="Wapinski I."/>
            <person name="Yoder O."/>
            <person name="Young S."/>
            <person name="Zeng Q."/>
            <person name="Zhou S."/>
            <person name="Galagan J."/>
            <person name="Cuomo C.A."/>
            <person name="Kistler H.C."/>
            <person name="Rep M."/>
        </authorList>
    </citation>
    <scope>GENOME REANNOTATION</scope>
    <source>
        <strain>ATCC MYA-4620 / CBS 123657 / FGSC 9075 / NRRL 31084 / PH-1</strain>
    </source>
</reference>
<reference key="3">
    <citation type="journal article" date="2015" name="BMC Genomics">
        <title>The completed genome sequence of the pathogenic ascomycete fungus Fusarium graminearum.</title>
        <authorList>
            <person name="King R."/>
            <person name="Urban M."/>
            <person name="Hammond-Kosack M.C.U."/>
            <person name="Hassani-Pak K."/>
            <person name="Hammond-Kosack K.E."/>
        </authorList>
    </citation>
    <scope>NUCLEOTIDE SEQUENCE [LARGE SCALE GENOMIC DNA]</scope>
    <source>
        <strain>ATCC MYA-4620 / CBS 123657 / FGSC 9075 / NRRL 31084 / PH-1</strain>
    </source>
</reference>
<name>DBP4_GIBZE</name>
<keyword id="KW-0067">ATP-binding</keyword>
<keyword id="KW-0347">Helicase</keyword>
<keyword id="KW-0378">Hydrolase</keyword>
<keyword id="KW-0547">Nucleotide-binding</keyword>
<keyword id="KW-0539">Nucleus</keyword>
<keyword id="KW-1185">Reference proteome</keyword>
<keyword id="KW-0690">Ribosome biogenesis</keyword>
<keyword id="KW-0694">RNA-binding</keyword>
<keyword id="KW-0698">rRNA processing</keyword>
<sequence>MPPHARSGRGPKPQKNGRTEQRQQKRKRDQEDLQQLQQRVDELDLKSDATKKFSELPLSVPTAEGLEIAHFQTLTDVQARAVPLALKGKDILGAAKTGSGKTLAFLIPVLEKLYRAQWTEFDGLGALIISPTRELAAQIFEVLRKVGTKHSFSAGLVIGGKSLKEEAERLDRMNILVCTPGRMLQHFDQTAGFDANNLQILVLDEADRIMDMGFQSAVDALIEHLPRERQTLMFSATQSKKVSDLARLSLKDPEYVSVHEAAVSATPTNLQQHYIVTPLTEKLDTLYGFIKANLKSKIIVFLSSGKQVRFVYESFRHLQPGIPLLHLHGRQKQGARMEITSRFTAAKQTCLFATDVVARGIDFPAVDWVIQADCPEDVDTYIHRVGRTARYESNGRAVLFLDPSEEPGMLKKLELKKIPIQKVNVKEKKKKSIKDQLQSMCFQNPDLKYLGQKAFISYSRSIHLQRDKDVFKFNKLDLDGFAASLGLPGTPQVKFRKGEDIKKIKNAPRQGMSSGSESDEDGEKKTKKKEVRTKYDKMFERTNQDVLSSHYNKLVLDGDDNDDDEEDFLSVKRVLRDDDLDDEAGAYKSTAKIIDGLGGEEPFVVDSKRREKALKSKKKMLKFKGNSTKMVFDDDGNAHAVYELRDEDDFMGEGPAEEQRRKFVEDETSRVREADVDDKALAKQKRREKREKRKAAERAELMGIVSDGEDAPVLHNADDGEDPLALLRSLPMGDGSDSEGDREPPKKRAKKWFEDDSDEENKSKSKSKGKVIRVQEEPETLEDLEALATGLLD</sequence>
<dbReference type="EC" id="3.6.4.13"/>
<dbReference type="EMBL" id="DS231665">
    <property type="protein sequence ID" value="ESU11684.1"/>
    <property type="molecule type" value="Genomic_DNA"/>
</dbReference>
<dbReference type="EMBL" id="HG970334">
    <property type="protein sequence ID" value="CEF86979.1"/>
    <property type="molecule type" value="Genomic_DNA"/>
</dbReference>
<dbReference type="RefSeq" id="XP_011324260.1">
    <property type="nucleotide sequence ID" value="XM_011325958.1"/>
</dbReference>
<dbReference type="SMR" id="Q4IAS1"/>
<dbReference type="FunCoup" id="Q4IAS1">
    <property type="interactions" value="1052"/>
</dbReference>
<dbReference type="STRING" id="229533.Q4IAS1"/>
<dbReference type="GeneID" id="23552859"/>
<dbReference type="KEGG" id="fgr:FGSG_05687"/>
<dbReference type="VEuPathDB" id="FungiDB:FGRAMPH1_01G18515"/>
<dbReference type="eggNOG" id="KOG0343">
    <property type="taxonomic scope" value="Eukaryota"/>
</dbReference>
<dbReference type="HOGENOM" id="CLU_003041_26_1_1"/>
<dbReference type="InParanoid" id="Q4IAS1"/>
<dbReference type="OrthoDB" id="119203at110618"/>
<dbReference type="Proteomes" id="UP000070720">
    <property type="component" value="Chromosome 3"/>
</dbReference>
<dbReference type="GO" id="GO:0005730">
    <property type="term" value="C:nucleolus"/>
    <property type="evidence" value="ECO:0007669"/>
    <property type="project" value="UniProtKB-SubCell"/>
</dbReference>
<dbReference type="GO" id="GO:0005524">
    <property type="term" value="F:ATP binding"/>
    <property type="evidence" value="ECO:0007669"/>
    <property type="project" value="UniProtKB-KW"/>
</dbReference>
<dbReference type="GO" id="GO:0016887">
    <property type="term" value="F:ATP hydrolysis activity"/>
    <property type="evidence" value="ECO:0007669"/>
    <property type="project" value="RHEA"/>
</dbReference>
<dbReference type="GO" id="GO:0003723">
    <property type="term" value="F:RNA binding"/>
    <property type="evidence" value="ECO:0007669"/>
    <property type="project" value="UniProtKB-KW"/>
</dbReference>
<dbReference type="GO" id="GO:0003724">
    <property type="term" value="F:RNA helicase activity"/>
    <property type="evidence" value="ECO:0007669"/>
    <property type="project" value="UniProtKB-EC"/>
</dbReference>
<dbReference type="GO" id="GO:0006364">
    <property type="term" value="P:rRNA processing"/>
    <property type="evidence" value="ECO:0007669"/>
    <property type="project" value="UniProtKB-KW"/>
</dbReference>
<dbReference type="CDD" id="cd17941">
    <property type="entry name" value="DEADc_DDX10"/>
    <property type="match status" value="1"/>
</dbReference>
<dbReference type="CDD" id="cd18787">
    <property type="entry name" value="SF2_C_DEAD"/>
    <property type="match status" value="1"/>
</dbReference>
<dbReference type="Gene3D" id="3.40.50.300">
    <property type="entry name" value="P-loop containing nucleotide triphosphate hydrolases"/>
    <property type="match status" value="2"/>
</dbReference>
<dbReference type="InterPro" id="IPR011545">
    <property type="entry name" value="DEAD/DEAH_box_helicase_dom"/>
</dbReference>
<dbReference type="InterPro" id="IPR014001">
    <property type="entry name" value="Helicase_ATP-bd"/>
</dbReference>
<dbReference type="InterPro" id="IPR001650">
    <property type="entry name" value="Helicase_C-like"/>
</dbReference>
<dbReference type="InterPro" id="IPR027417">
    <property type="entry name" value="P-loop_NTPase"/>
</dbReference>
<dbReference type="InterPro" id="IPR000629">
    <property type="entry name" value="RNA-helicase_DEAD-box_CS"/>
</dbReference>
<dbReference type="InterPro" id="IPR025313">
    <property type="entry name" value="SPB4-like_CTE"/>
</dbReference>
<dbReference type="PANTHER" id="PTHR24031">
    <property type="entry name" value="RNA HELICASE"/>
    <property type="match status" value="1"/>
</dbReference>
<dbReference type="Pfam" id="PF13959">
    <property type="entry name" value="CTE_SPB4"/>
    <property type="match status" value="1"/>
</dbReference>
<dbReference type="Pfam" id="PF00270">
    <property type="entry name" value="DEAD"/>
    <property type="match status" value="1"/>
</dbReference>
<dbReference type="Pfam" id="PF00271">
    <property type="entry name" value="Helicase_C"/>
    <property type="match status" value="1"/>
</dbReference>
<dbReference type="SMART" id="SM00487">
    <property type="entry name" value="DEXDc"/>
    <property type="match status" value="1"/>
</dbReference>
<dbReference type="SMART" id="SM01178">
    <property type="entry name" value="DUF4217"/>
    <property type="match status" value="1"/>
</dbReference>
<dbReference type="SMART" id="SM00490">
    <property type="entry name" value="HELICc"/>
    <property type="match status" value="1"/>
</dbReference>
<dbReference type="SUPFAM" id="SSF52540">
    <property type="entry name" value="P-loop containing nucleoside triphosphate hydrolases"/>
    <property type="match status" value="1"/>
</dbReference>
<dbReference type="PROSITE" id="PS00039">
    <property type="entry name" value="DEAD_ATP_HELICASE"/>
    <property type="match status" value="1"/>
</dbReference>
<dbReference type="PROSITE" id="PS51192">
    <property type="entry name" value="HELICASE_ATP_BIND_1"/>
    <property type="match status" value="1"/>
</dbReference>
<dbReference type="PROSITE" id="PS51194">
    <property type="entry name" value="HELICASE_CTER"/>
    <property type="match status" value="1"/>
</dbReference>
<dbReference type="PROSITE" id="PS51195">
    <property type="entry name" value="Q_MOTIF"/>
    <property type="match status" value="1"/>
</dbReference>
<evidence type="ECO:0000250" key="1"/>
<evidence type="ECO:0000255" key="2">
    <source>
        <dbReference type="PROSITE-ProRule" id="PRU00541"/>
    </source>
</evidence>
<evidence type="ECO:0000255" key="3">
    <source>
        <dbReference type="PROSITE-ProRule" id="PRU00542"/>
    </source>
</evidence>
<evidence type="ECO:0000256" key="4">
    <source>
        <dbReference type="SAM" id="MobiDB-lite"/>
    </source>
</evidence>
<evidence type="ECO:0000305" key="5"/>